<comment type="function">
    <text evidence="1">In the cytoplasm, catalyzes the conversion of glucose-6-phosphate to fructose-6-phosphate, the second step in glycolysis, and the reverse reaction during gluconeogenesis.</text>
</comment>
<comment type="catalytic activity">
    <reaction evidence="1">
        <text>alpha-D-glucose 6-phosphate = beta-D-fructose 6-phosphate</text>
        <dbReference type="Rhea" id="RHEA:11816"/>
        <dbReference type="ChEBI" id="CHEBI:57634"/>
        <dbReference type="ChEBI" id="CHEBI:58225"/>
        <dbReference type="EC" id="5.3.1.9"/>
    </reaction>
</comment>
<comment type="pathway">
    <text evidence="4">Carbohydrate degradation; glycolysis; D-glyceraldehyde 3-phosphate and glycerone phosphate from D-glucose: step 2/4.</text>
</comment>
<comment type="subunit">
    <text evidence="1">Homodimer.</text>
</comment>
<comment type="subcellular location">
    <subcellularLocation>
        <location evidence="3">Cytoplasm</location>
        <location evidence="3">Cytosol</location>
    </subcellularLocation>
</comment>
<comment type="similarity">
    <text evidence="4">Belongs to the GPI family.</text>
</comment>
<sequence length="555" mass="61310">MASSNTYSNFKLATELPAWSKLQKLYDAQGKSLNVKEEFQKDSARYNKYAKTLTNYDGSKILFDFSKNLINDEILATLIELAKEAKVTDLRDAMFAGEHINFTEDRAVYHVALRNRANKPMKVDGVDVAPEVDAVLQHMKEFSEQVRSGEWKGYTGKKITDVVNIGIGGSDLGPVMVTEALKHYAGVLDVHFVSNIDGTHIAEVLKVVDPETTLFLVASKTFTTAETITNANTAKNWFLSKTGNDQSNIAKHFAALSTNETEVAKFGIDTKNMFGFENWVGGRYSVWSAIGLSVALYIGFDNFEAFLKGAEAVDKHFVETPLEDNIPLLGGLLSVWYNNFFGAQTHLVAPFDQYLHRFPAYLQQLSMESNGKSVTRGNVFSTYSTGSILFGEPATNAQHSFFQLVHQGTKLIPSDFILAAQSHNPIENNLHQKMLASNFFAQAEALMVGKDEAQVKSEGATGGLVPHKIFSGNRPTTSILAQKITPAALGSLIAYYEHVTFTEGAIWNINSFDQWGVELGKVLAKVIGKELDNTEKITAHDASTNGLINQFKEWL</sequence>
<proteinExistence type="inferred from homology"/>
<reference key="1">
    <citation type="journal article" date="2004" name="Nature">
        <title>Genome evolution in yeasts.</title>
        <authorList>
            <person name="Dujon B."/>
            <person name="Sherman D."/>
            <person name="Fischer G."/>
            <person name="Durrens P."/>
            <person name="Casaregola S."/>
            <person name="Lafontaine I."/>
            <person name="de Montigny J."/>
            <person name="Marck C."/>
            <person name="Neuveglise C."/>
            <person name="Talla E."/>
            <person name="Goffard N."/>
            <person name="Frangeul L."/>
            <person name="Aigle M."/>
            <person name="Anthouard V."/>
            <person name="Babour A."/>
            <person name="Barbe V."/>
            <person name="Barnay S."/>
            <person name="Blanchin S."/>
            <person name="Beckerich J.-M."/>
            <person name="Beyne E."/>
            <person name="Bleykasten C."/>
            <person name="Boisrame A."/>
            <person name="Boyer J."/>
            <person name="Cattolico L."/>
            <person name="Confanioleri F."/>
            <person name="de Daruvar A."/>
            <person name="Despons L."/>
            <person name="Fabre E."/>
            <person name="Fairhead C."/>
            <person name="Ferry-Dumazet H."/>
            <person name="Groppi A."/>
            <person name="Hantraye F."/>
            <person name="Hennequin C."/>
            <person name="Jauniaux N."/>
            <person name="Joyet P."/>
            <person name="Kachouri R."/>
            <person name="Kerrest A."/>
            <person name="Koszul R."/>
            <person name="Lemaire M."/>
            <person name="Lesur I."/>
            <person name="Ma L."/>
            <person name="Muller H."/>
            <person name="Nicaud J.-M."/>
            <person name="Nikolski M."/>
            <person name="Oztas S."/>
            <person name="Ozier-Kalogeropoulos O."/>
            <person name="Pellenz S."/>
            <person name="Potier S."/>
            <person name="Richard G.-F."/>
            <person name="Straub M.-L."/>
            <person name="Suleau A."/>
            <person name="Swennen D."/>
            <person name="Tekaia F."/>
            <person name="Wesolowski-Louvel M."/>
            <person name="Westhof E."/>
            <person name="Wirth B."/>
            <person name="Zeniou-Meyer M."/>
            <person name="Zivanovic Y."/>
            <person name="Bolotin-Fukuhara M."/>
            <person name="Thierry A."/>
            <person name="Bouchier C."/>
            <person name="Caudron B."/>
            <person name="Scarpelli C."/>
            <person name="Gaillardin C."/>
            <person name="Weissenbach J."/>
            <person name="Wincker P."/>
            <person name="Souciet J.-L."/>
        </authorList>
    </citation>
    <scope>NUCLEOTIDE SEQUENCE [LARGE SCALE GENOMIC DNA]</scope>
    <source>
        <strain>ATCC 2001 / BCRC 20586 / JCM 3761 / NBRC 0622 / NRRL Y-65 / CBS 138</strain>
    </source>
</reference>
<evidence type="ECO:0000250" key="1">
    <source>
        <dbReference type="UniProtKB" id="P06744"/>
    </source>
</evidence>
<evidence type="ECO:0000250" key="2">
    <source>
        <dbReference type="UniProtKB" id="P06745"/>
    </source>
</evidence>
<evidence type="ECO:0000250" key="3">
    <source>
        <dbReference type="UniProtKB" id="P78917"/>
    </source>
</evidence>
<evidence type="ECO:0000305" key="4"/>
<name>G6PI_CANGA</name>
<keyword id="KW-0963">Cytoplasm</keyword>
<keyword id="KW-0312">Gluconeogenesis</keyword>
<keyword id="KW-0324">Glycolysis</keyword>
<keyword id="KW-0413">Isomerase</keyword>
<keyword id="KW-1185">Reference proteome</keyword>
<organism>
    <name type="scientific">Candida glabrata (strain ATCC 2001 / BCRC 20586 / JCM 3761 / NBRC 0622 / NRRL Y-65 / CBS 138)</name>
    <name type="common">Yeast</name>
    <name type="synonym">Nakaseomyces glabratus</name>
    <dbReference type="NCBI Taxonomy" id="284593"/>
    <lineage>
        <taxon>Eukaryota</taxon>
        <taxon>Fungi</taxon>
        <taxon>Dikarya</taxon>
        <taxon>Ascomycota</taxon>
        <taxon>Saccharomycotina</taxon>
        <taxon>Saccharomycetes</taxon>
        <taxon>Saccharomycetales</taxon>
        <taxon>Saccharomycetaceae</taxon>
        <taxon>Nakaseomyces</taxon>
    </lineage>
</organism>
<gene>
    <name type="primary">PGI1</name>
    <name type="ordered locus">CAGL0H05445g</name>
</gene>
<dbReference type="EC" id="5.3.1.9" evidence="1"/>
<dbReference type="EMBL" id="CR380954">
    <property type="protein sequence ID" value="CAG59966.1"/>
    <property type="molecule type" value="Genomic_DNA"/>
</dbReference>
<dbReference type="RefSeq" id="XP_447033.1">
    <property type="nucleotide sequence ID" value="XM_447033.1"/>
</dbReference>
<dbReference type="SMR" id="Q6FRW1"/>
<dbReference type="FunCoup" id="Q6FRW1">
    <property type="interactions" value="1272"/>
</dbReference>
<dbReference type="STRING" id="284593.Q6FRW1"/>
<dbReference type="EnsemblFungi" id="CAGL0H05445g-T">
    <property type="protein sequence ID" value="CAGL0H05445g-T-p1"/>
    <property type="gene ID" value="CAGL0H05445g"/>
</dbReference>
<dbReference type="GeneID" id="2888511"/>
<dbReference type="KEGG" id="cgr:2888511"/>
<dbReference type="CGD" id="CAL0129964">
    <property type="gene designation" value="PGI1"/>
</dbReference>
<dbReference type="VEuPathDB" id="FungiDB:B1J91_H05445g"/>
<dbReference type="VEuPathDB" id="FungiDB:CAGL0H05445g"/>
<dbReference type="eggNOG" id="KOG2446">
    <property type="taxonomic scope" value="Eukaryota"/>
</dbReference>
<dbReference type="HOGENOM" id="CLU_017947_3_1_1"/>
<dbReference type="InParanoid" id="Q6FRW1"/>
<dbReference type="OMA" id="DWYRQLW"/>
<dbReference type="UniPathway" id="UPA00109">
    <property type="reaction ID" value="UER00181"/>
</dbReference>
<dbReference type="Proteomes" id="UP000002428">
    <property type="component" value="Chromosome H"/>
</dbReference>
<dbReference type="GO" id="GO:0009986">
    <property type="term" value="C:cell surface"/>
    <property type="evidence" value="ECO:0000314"/>
    <property type="project" value="CGD"/>
</dbReference>
<dbReference type="GO" id="GO:0005829">
    <property type="term" value="C:cytosol"/>
    <property type="evidence" value="ECO:0000314"/>
    <property type="project" value="CGD"/>
</dbReference>
<dbReference type="GO" id="GO:0005739">
    <property type="term" value="C:mitochondrion"/>
    <property type="evidence" value="ECO:0007669"/>
    <property type="project" value="EnsemblFungi"/>
</dbReference>
<dbReference type="GO" id="GO:0097367">
    <property type="term" value="F:carbohydrate derivative binding"/>
    <property type="evidence" value="ECO:0007669"/>
    <property type="project" value="InterPro"/>
</dbReference>
<dbReference type="GO" id="GO:0004347">
    <property type="term" value="F:glucose-6-phosphate isomerase activity"/>
    <property type="evidence" value="ECO:0007669"/>
    <property type="project" value="UniProtKB-EC"/>
</dbReference>
<dbReference type="GO" id="GO:0048029">
    <property type="term" value="F:monosaccharide binding"/>
    <property type="evidence" value="ECO:0007669"/>
    <property type="project" value="TreeGrafter"/>
</dbReference>
<dbReference type="GO" id="GO:0006094">
    <property type="term" value="P:gluconeogenesis"/>
    <property type="evidence" value="ECO:0007669"/>
    <property type="project" value="UniProtKB-KW"/>
</dbReference>
<dbReference type="GO" id="GO:0051156">
    <property type="term" value="P:glucose 6-phosphate metabolic process"/>
    <property type="evidence" value="ECO:0007669"/>
    <property type="project" value="TreeGrafter"/>
</dbReference>
<dbReference type="GO" id="GO:0006096">
    <property type="term" value="P:glycolytic process"/>
    <property type="evidence" value="ECO:0007669"/>
    <property type="project" value="UniProtKB-UniPathway"/>
</dbReference>
<dbReference type="CDD" id="cd05015">
    <property type="entry name" value="SIS_PGI_1"/>
    <property type="match status" value="1"/>
</dbReference>
<dbReference type="CDD" id="cd05016">
    <property type="entry name" value="SIS_PGI_2"/>
    <property type="match status" value="1"/>
</dbReference>
<dbReference type="FunFam" id="1.10.1390.10:FF:000001">
    <property type="entry name" value="Glucose-6-phosphate isomerase"/>
    <property type="match status" value="1"/>
</dbReference>
<dbReference type="FunFam" id="3.40.50.10490:FF:000004">
    <property type="entry name" value="Glucose-6-phosphate isomerase"/>
    <property type="match status" value="1"/>
</dbReference>
<dbReference type="Gene3D" id="1.10.1390.10">
    <property type="match status" value="1"/>
</dbReference>
<dbReference type="Gene3D" id="3.40.50.10490">
    <property type="entry name" value="Glucose-6-phosphate isomerase like protein, domain 1"/>
    <property type="match status" value="2"/>
</dbReference>
<dbReference type="HAMAP" id="MF_00473">
    <property type="entry name" value="G6P_isomerase"/>
    <property type="match status" value="1"/>
</dbReference>
<dbReference type="InterPro" id="IPR001672">
    <property type="entry name" value="G6P_Isomerase"/>
</dbReference>
<dbReference type="InterPro" id="IPR023096">
    <property type="entry name" value="G6P_Isomerase_C"/>
</dbReference>
<dbReference type="InterPro" id="IPR018189">
    <property type="entry name" value="Phosphoglucose_isomerase_CS"/>
</dbReference>
<dbReference type="InterPro" id="IPR046348">
    <property type="entry name" value="SIS_dom_sf"/>
</dbReference>
<dbReference type="InterPro" id="IPR035476">
    <property type="entry name" value="SIS_PGI_1"/>
</dbReference>
<dbReference type="InterPro" id="IPR035482">
    <property type="entry name" value="SIS_PGI_2"/>
</dbReference>
<dbReference type="NCBIfam" id="NF001211">
    <property type="entry name" value="PRK00179.1"/>
    <property type="match status" value="1"/>
</dbReference>
<dbReference type="PANTHER" id="PTHR11469">
    <property type="entry name" value="GLUCOSE-6-PHOSPHATE ISOMERASE"/>
    <property type="match status" value="1"/>
</dbReference>
<dbReference type="PANTHER" id="PTHR11469:SF1">
    <property type="entry name" value="GLUCOSE-6-PHOSPHATE ISOMERASE"/>
    <property type="match status" value="1"/>
</dbReference>
<dbReference type="Pfam" id="PF00342">
    <property type="entry name" value="PGI"/>
    <property type="match status" value="1"/>
</dbReference>
<dbReference type="PRINTS" id="PR00662">
    <property type="entry name" value="G6PISOMERASE"/>
</dbReference>
<dbReference type="SUPFAM" id="SSF53697">
    <property type="entry name" value="SIS domain"/>
    <property type="match status" value="1"/>
</dbReference>
<dbReference type="PROSITE" id="PS00765">
    <property type="entry name" value="P_GLUCOSE_ISOMERASE_1"/>
    <property type="match status" value="1"/>
</dbReference>
<dbReference type="PROSITE" id="PS00174">
    <property type="entry name" value="P_GLUCOSE_ISOMERASE_2"/>
    <property type="match status" value="1"/>
</dbReference>
<dbReference type="PROSITE" id="PS51463">
    <property type="entry name" value="P_GLUCOSE_ISOMERASE_3"/>
    <property type="match status" value="1"/>
</dbReference>
<protein>
    <recommendedName>
        <fullName>Glucose-6-phosphate isomerase</fullName>
        <shortName>GPI</shortName>
        <ecNumber evidence="1">5.3.1.9</ecNumber>
    </recommendedName>
    <alternativeName>
        <fullName>Phosphoglucose isomerase</fullName>
        <shortName>PGI</shortName>
    </alternativeName>
    <alternativeName>
        <fullName>Phosphohexose isomerase</fullName>
        <shortName>PHI</shortName>
    </alternativeName>
</protein>
<accession>Q6FRW1</accession>
<feature type="chain" id="PRO_0000180573" description="Glucose-6-phosphate isomerase">
    <location>
        <begin position="1"/>
        <end position="555"/>
    </location>
</feature>
<feature type="active site" description="Proton donor" evidence="1">
    <location>
        <position position="368"/>
    </location>
</feature>
<feature type="active site" evidence="1">
    <location>
        <position position="399"/>
    </location>
</feature>
<feature type="active site" evidence="1">
    <location>
        <position position="521"/>
    </location>
</feature>
<feature type="binding site" evidence="2">
    <location>
        <begin position="169"/>
        <end position="170"/>
    </location>
    <ligand>
        <name>D-glucose 6-phosphate</name>
        <dbReference type="ChEBI" id="CHEBI:61548"/>
    </ligand>
</feature>
<feature type="binding site" evidence="2">
    <location>
        <begin position="219"/>
        <end position="224"/>
    </location>
    <ligand>
        <name>D-glucose 6-phosphate</name>
        <dbReference type="ChEBI" id="CHEBI:61548"/>
    </ligand>
</feature>
<feature type="binding site" evidence="2">
    <location>
        <position position="364"/>
    </location>
    <ligand>
        <name>D-glucose 6-phosphate</name>
        <dbReference type="ChEBI" id="CHEBI:61548"/>
    </ligand>
</feature>
<feature type="binding site" evidence="2">
    <location>
        <position position="368"/>
    </location>
    <ligand>
        <name>D-glucose 6-phosphate</name>
        <dbReference type="ChEBI" id="CHEBI:61548"/>
    </ligand>
</feature>
<feature type="binding site" evidence="2">
    <location>
        <position position="399"/>
    </location>
    <ligand>
        <name>D-glucose 6-phosphate</name>
        <dbReference type="ChEBI" id="CHEBI:61548"/>
    </ligand>
</feature>
<feature type="binding site" evidence="2">
    <location>
        <position position="521"/>
    </location>
    <ligand>
        <name>D-glucose 6-phosphate</name>
        <dbReference type="ChEBI" id="CHEBI:61548"/>
    </ligand>
</feature>